<gene>
    <name type="primary">yajD</name>
    <name type="ordered locus">Z0511</name>
    <name type="ordered locus">ECs0463</name>
</gene>
<organism>
    <name type="scientific">Escherichia coli O157:H7</name>
    <dbReference type="NCBI Taxonomy" id="83334"/>
    <lineage>
        <taxon>Bacteria</taxon>
        <taxon>Pseudomonadati</taxon>
        <taxon>Pseudomonadota</taxon>
        <taxon>Gammaproteobacteria</taxon>
        <taxon>Enterobacterales</taxon>
        <taxon>Enterobacteriaceae</taxon>
        <taxon>Escherichia</taxon>
    </lineage>
</organism>
<comment type="similarity">
    <text evidence="1">Belongs to the HNH nuclease family.</text>
</comment>
<sequence>MAIIPKNYARLESGYREKALKIYPWVCGRCSREFVYSNLRELTVHHIDHDHTNNPEDGSNWELLCLYCHDHEHSKYTEADQYGTTVIAGEDAQKDVGEAKYNPFADLKAMMNKKK</sequence>
<name>YAJD_ECO57</name>
<evidence type="ECO:0000305" key="1"/>
<dbReference type="EC" id="3.1.-.-"/>
<dbReference type="EMBL" id="AE005174">
    <property type="protein sequence ID" value="AAG54759.1"/>
    <property type="molecule type" value="Genomic_DNA"/>
</dbReference>
<dbReference type="EMBL" id="BA000007">
    <property type="protein sequence ID" value="BAB33886.1"/>
    <property type="molecule type" value="Genomic_DNA"/>
</dbReference>
<dbReference type="PIR" id="C85537">
    <property type="entry name" value="C85537"/>
</dbReference>
<dbReference type="PIR" id="G90686">
    <property type="entry name" value="G90686"/>
</dbReference>
<dbReference type="RefSeq" id="NP_308490.1">
    <property type="nucleotide sequence ID" value="NC_002695.1"/>
</dbReference>
<dbReference type="RefSeq" id="WP_000974813.1">
    <property type="nucleotide sequence ID" value="NZ_VOAI01000005.1"/>
</dbReference>
<dbReference type="STRING" id="155864.Z0511"/>
<dbReference type="GeneID" id="914565"/>
<dbReference type="GeneID" id="93777050"/>
<dbReference type="KEGG" id="ece:Z0511"/>
<dbReference type="KEGG" id="ecs:ECs_0463"/>
<dbReference type="PATRIC" id="fig|386585.9.peg.563"/>
<dbReference type="eggNOG" id="COG1403">
    <property type="taxonomic scope" value="Bacteria"/>
</dbReference>
<dbReference type="HOGENOM" id="CLU_136125_1_0_6"/>
<dbReference type="OMA" id="CHDNEHA"/>
<dbReference type="Proteomes" id="UP000000558">
    <property type="component" value="Chromosome"/>
</dbReference>
<dbReference type="Proteomes" id="UP000002519">
    <property type="component" value="Chromosome"/>
</dbReference>
<dbReference type="GO" id="GO:0005829">
    <property type="term" value="C:cytosol"/>
    <property type="evidence" value="ECO:0007669"/>
    <property type="project" value="TreeGrafter"/>
</dbReference>
<dbReference type="GO" id="GO:0004519">
    <property type="term" value="F:endonuclease activity"/>
    <property type="evidence" value="ECO:0007669"/>
    <property type="project" value="InterPro"/>
</dbReference>
<dbReference type="GO" id="GO:0003676">
    <property type="term" value="F:nucleic acid binding"/>
    <property type="evidence" value="ECO:0007669"/>
    <property type="project" value="InterPro"/>
</dbReference>
<dbReference type="GO" id="GO:0008270">
    <property type="term" value="F:zinc ion binding"/>
    <property type="evidence" value="ECO:0007669"/>
    <property type="project" value="InterPro"/>
</dbReference>
<dbReference type="CDD" id="cd00085">
    <property type="entry name" value="HNHc"/>
    <property type="match status" value="1"/>
</dbReference>
<dbReference type="Gene3D" id="1.10.30.50">
    <property type="match status" value="1"/>
</dbReference>
<dbReference type="InterPro" id="IPR002711">
    <property type="entry name" value="HNH"/>
</dbReference>
<dbReference type="InterPro" id="IPR003615">
    <property type="entry name" value="HNH_nuc"/>
</dbReference>
<dbReference type="NCBIfam" id="NF008448">
    <property type="entry name" value="PRK11295.1"/>
    <property type="match status" value="1"/>
</dbReference>
<dbReference type="PANTHER" id="PTHR41286">
    <property type="entry name" value="HNH NUCLEASE YAJD-RELATED"/>
    <property type="match status" value="1"/>
</dbReference>
<dbReference type="PANTHER" id="PTHR41286:SF1">
    <property type="entry name" value="HNH NUCLEASE YAJD-RELATED"/>
    <property type="match status" value="1"/>
</dbReference>
<dbReference type="Pfam" id="PF01844">
    <property type="entry name" value="HNH"/>
    <property type="match status" value="1"/>
</dbReference>
<dbReference type="SMART" id="SM00507">
    <property type="entry name" value="HNHc"/>
    <property type="match status" value="1"/>
</dbReference>
<reference key="1">
    <citation type="journal article" date="2001" name="Nature">
        <title>Genome sequence of enterohaemorrhagic Escherichia coli O157:H7.</title>
        <authorList>
            <person name="Perna N.T."/>
            <person name="Plunkett G. III"/>
            <person name="Burland V."/>
            <person name="Mau B."/>
            <person name="Glasner J.D."/>
            <person name="Rose D.J."/>
            <person name="Mayhew G.F."/>
            <person name="Evans P.S."/>
            <person name="Gregor J."/>
            <person name="Kirkpatrick H.A."/>
            <person name="Posfai G."/>
            <person name="Hackett J."/>
            <person name="Klink S."/>
            <person name="Boutin A."/>
            <person name="Shao Y."/>
            <person name="Miller L."/>
            <person name="Grotbeck E.J."/>
            <person name="Davis N.W."/>
            <person name="Lim A."/>
            <person name="Dimalanta E.T."/>
            <person name="Potamousis K."/>
            <person name="Apodaca J."/>
            <person name="Anantharaman T.S."/>
            <person name="Lin J."/>
            <person name="Yen G."/>
            <person name="Schwartz D.C."/>
            <person name="Welch R.A."/>
            <person name="Blattner F.R."/>
        </authorList>
    </citation>
    <scope>NUCLEOTIDE SEQUENCE [LARGE SCALE GENOMIC DNA]</scope>
    <source>
        <strain>O157:H7 / EDL933 / ATCC 700927 / EHEC</strain>
    </source>
</reference>
<reference key="2">
    <citation type="journal article" date="2001" name="DNA Res.">
        <title>Complete genome sequence of enterohemorrhagic Escherichia coli O157:H7 and genomic comparison with a laboratory strain K-12.</title>
        <authorList>
            <person name="Hayashi T."/>
            <person name="Makino K."/>
            <person name="Ohnishi M."/>
            <person name="Kurokawa K."/>
            <person name="Ishii K."/>
            <person name="Yokoyama K."/>
            <person name="Han C.-G."/>
            <person name="Ohtsubo E."/>
            <person name="Nakayama K."/>
            <person name="Murata T."/>
            <person name="Tanaka M."/>
            <person name="Tobe T."/>
            <person name="Iida T."/>
            <person name="Takami H."/>
            <person name="Honda T."/>
            <person name="Sasakawa C."/>
            <person name="Ogasawara N."/>
            <person name="Yasunaga T."/>
            <person name="Kuhara S."/>
            <person name="Shiba T."/>
            <person name="Hattori M."/>
            <person name="Shinagawa H."/>
        </authorList>
    </citation>
    <scope>NUCLEOTIDE SEQUENCE [LARGE SCALE GENOMIC DNA]</scope>
    <source>
        <strain>O157:H7 / Sakai / RIMD 0509952 / EHEC</strain>
    </source>
</reference>
<keyword id="KW-0378">Hydrolase</keyword>
<keyword id="KW-0540">Nuclease</keyword>
<keyword id="KW-1185">Reference proteome</keyword>
<proteinExistence type="inferred from homology"/>
<feature type="chain" id="PRO_0000168607" description="Putative HNH nuclease YajD">
    <location>
        <begin position="1"/>
        <end position="115"/>
    </location>
</feature>
<feature type="domain" description="HNH">
    <location>
        <begin position="27"/>
        <end position="75"/>
    </location>
</feature>
<accession>P0AAQ4</accession>
<accession>P19678</accession>
<accession>P77666</accession>
<protein>
    <recommendedName>
        <fullName>Putative HNH nuclease YajD</fullName>
        <ecNumber>3.1.-.-</ecNumber>
    </recommendedName>
</protein>